<keyword id="KW-0413">Isomerase</keyword>
<keyword id="KW-0819">tRNA processing</keyword>
<protein>
    <recommendedName>
        <fullName evidence="1">tRNA pseudouridine synthase B</fullName>
        <ecNumber evidence="1">5.4.99.25</ecNumber>
    </recommendedName>
    <alternativeName>
        <fullName evidence="1">tRNA pseudouridine(55) synthase</fullName>
        <shortName evidence="1">Psi55 synthase</shortName>
    </alternativeName>
    <alternativeName>
        <fullName evidence="1">tRNA pseudouridylate synthase</fullName>
    </alternativeName>
    <alternativeName>
        <fullName evidence="1">tRNA-uridine isomerase</fullName>
    </alternativeName>
</protein>
<dbReference type="EC" id="5.4.99.25" evidence="1"/>
<dbReference type="EMBL" id="CP000946">
    <property type="protein sequence ID" value="ACA76209.1"/>
    <property type="molecule type" value="Genomic_DNA"/>
</dbReference>
<dbReference type="RefSeq" id="WP_000089698.1">
    <property type="nucleotide sequence ID" value="NZ_MTFT01000027.1"/>
</dbReference>
<dbReference type="SMR" id="B1IQV5"/>
<dbReference type="GeneID" id="93778817"/>
<dbReference type="KEGG" id="ecl:EcolC_0532"/>
<dbReference type="HOGENOM" id="CLU_032087_0_3_6"/>
<dbReference type="GO" id="GO:0003723">
    <property type="term" value="F:RNA binding"/>
    <property type="evidence" value="ECO:0007669"/>
    <property type="project" value="InterPro"/>
</dbReference>
<dbReference type="GO" id="GO:0160148">
    <property type="term" value="F:tRNA pseudouridine(55) synthase activity"/>
    <property type="evidence" value="ECO:0007669"/>
    <property type="project" value="UniProtKB-EC"/>
</dbReference>
<dbReference type="GO" id="GO:1990481">
    <property type="term" value="P:mRNA pseudouridine synthesis"/>
    <property type="evidence" value="ECO:0007669"/>
    <property type="project" value="TreeGrafter"/>
</dbReference>
<dbReference type="GO" id="GO:0031119">
    <property type="term" value="P:tRNA pseudouridine synthesis"/>
    <property type="evidence" value="ECO:0007669"/>
    <property type="project" value="UniProtKB-UniRule"/>
</dbReference>
<dbReference type="CDD" id="cd02573">
    <property type="entry name" value="PseudoU_synth_EcTruB"/>
    <property type="match status" value="1"/>
</dbReference>
<dbReference type="CDD" id="cd21152">
    <property type="entry name" value="PUA_TruB_bacterial"/>
    <property type="match status" value="1"/>
</dbReference>
<dbReference type="FunFam" id="2.30.130.10:FF:000004">
    <property type="entry name" value="tRNA pseudouridine synthase B"/>
    <property type="match status" value="1"/>
</dbReference>
<dbReference type="FunFam" id="3.30.2350.10:FF:000003">
    <property type="entry name" value="tRNA pseudouridine synthase B"/>
    <property type="match status" value="1"/>
</dbReference>
<dbReference type="Gene3D" id="3.30.2350.10">
    <property type="entry name" value="Pseudouridine synthase"/>
    <property type="match status" value="1"/>
</dbReference>
<dbReference type="Gene3D" id="2.30.130.10">
    <property type="entry name" value="PUA domain"/>
    <property type="match status" value="1"/>
</dbReference>
<dbReference type="HAMAP" id="MF_01080">
    <property type="entry name" value="TruB_bact"/>
    <property type="match status" value="1"/>
</dbReference>
<dbReference type="InterPro" id="IPR020103">
    <property type="entry name" value="PsdUridine_synth_cat_dom_sf"/>
</dbReference>
<dbReference type="InterPro" id="IPR002501">
    <property type="entry name" value="PsdUridine_synth_N"/>
</dbReference>
<dbReference type="InterPro" id="IPR015947">
    <property type="entry name" value="PUA-like_sf"/>
</dbReference>
<dbReference type="InterPro" id="IPR036974">
    <property type="entry name" value="PUA_sf"/>
</dbReference>
<dbReference type="InterPro" id="IPR014780">
    <property type="entry name" value="tRNA_psdUridine_synth_TruB"/>
</dbReference>
<dbReference type="InterPro" id="IPR015240">
    <property type="entry name" value="tRNA_sdUridine_synth_fam1_C"/>
</dbReference>
<dbReference type="InterPro" id="IPR032819">
    <property type="entry name" value="TruB_C"/>
</dbReference>
<dbReference type="NCBIfam" id="TIGR00431">
    <property type="entry name" value="TruB"/>
    <property type="match status" value="1"/>
</dbReference>
<dbReference type="PANTHER" id="PTHR13767:SF2">
    <property type="entry name" value="PSEUDOURIDYLATE SYNTHASE TRUB1"/>
    <property type="match status" value="1"/>
</dbReference>
<dbReference type="PANTHER" id="PTHR13767">
    <property type="entry name" value="TRNA-PSEUDOURIDINE SYNTHASE"/>
    <property type="match status" value="1"/>
</dbReference>
<dbReference type="Pfam" id="PF09157">
    <property type="entry name" value="TruB-C_2"/>
    <property type="match status" value="1"/>
</dbReference>
<dbReference type="Pfam" id="PF16198">
    <property type="entry name" value="TruB_C_2"/>
    <property type="match status" value="1"/>
</dbReference>
<dbReference type="Pfam" id="PF01509">
    <property type="entry name" value="TruB_N"/>
    <property type="match status" value="1"/>
</dbReference>
<dbReference type="SUPFAM" id="SSF55120">
    <property type="entry name" value="Pseudouridine synthase"/>
    <property type="match status" value="1"/>
</dbReference>
<dbReference type="SUPFAM" id="SSF88697">
    <property type="entry name" value="PUA domain-like"/>
    <property type="match status" value="1"/>
</dbReference>
<gene>
    <name evidence="1" type="primary">truB</name>
    <name type="ordered locus">EcolC_0532</name>
</gene>
<proteinExistence type="inferred from homology"/>
<reference key="1">
    <citation type="submission" date="2008-02" db="EMBL/GenBank/DDBJ databases">
        <title>Complete sequence of Escherichia coli C str. ATCC 8739.</title>
        <authorList>
            <person name="Copeland A."/>
            <person name="Lucas S."/>
            <person name="Lapidus A."/>
            <person name="Glavina del Rio T."/>
            <person name="Dalin E."/>
            <person name="Tice H."/>
            <person name="Bruce D."/>
            <person name="Goodwin L."/>
            <person name="Pitluck S."/>
            <person name="Kiss H."/>
            <person name="Brettin T."/>
            <person name="Detter J.C."/>
            <person name="Han C."/>
            <person name="Kuske C.R."/>
            <person name="Schmutz J."/>
            <person name="Larimer F."/>
            <person name="Land M."/>
            <person name="Hauser L."/>
            <person name="Kyrpides N."/>
            <person name="Mikhailova N."/>
            <person name="Ingram L."/>
            <person name="Richardson P."/>
        </authorList>
    </citation>
    <scope>NUCLEOTIDE SEQUENCE [LARGE SCALE GENOMIC DNA]</scope>
    <source>
        <strain>ATCC 8739 / DSM 1576 / NBRC 3972 / NCIMB 8545 / WDCM 00012 / Crooks</strain>
    </source>
</reference>
<accession>B1IQV5</accession>
<evidence type="ECO:0000255" key="1">
    <source>
        <dbReference type="HAMAP-Rule" id="MF_01080"/>
    </source>
</evidence>
<sequence length="314" mass="35087">MSRPRRRGRDINGVLLLDKPQGMSSNDALQKVKRIYNANRAGHTGALDPLATGMLPICLGEATKFSQYLLDSDKRYRVIARLGQRTDTSDADGQIVEERPVTFSAEQLAAALDTFRGDIEQIPSMYSALKYQGKKLYEYARQGIEVPREARPITVYELLFIRHEGNELELEIHCSKGTYIRTIIDDLGEKLGCGAHVIYLRRLAVSKYPVERMVTLEHLRELVEQAEQQDIPAAELLDPLLMPMDSPASDYPVVNLPLTSSVYFKNGNPVRTSGAPLEGLVRVTEGENGKFIGMGEIDDEGRVAPRRLVVEYPA</sequence>
<name>TRUB_ECOLC</name>
<feature type="chain" id="PRO_1000084587" description="tRNA pseudouridine synthase B">
    <location>
        <begin position="1"/>
        <end position="314"/>
    </location>
</feature>
<feature type="active site" description="Nucleophile" evidence="1">
    <location>
        <position position="48"/>
    </location>
</feature>
<feature type="binding site" evidence="1">
    <location>
        <position position="43"/>
    </location>
    <ligand>
        <name>substrate</name>
    </ligand>
</feature>
<feature type="binding site" evidence="1">
    <location>
        <position position="76"/>
    </location>
    <ligand>
        <name>substrate</name>
    </ligand>
</feature>
<feature type="binding site" evidence="1">
    <location>
        <position position="179"/>
    </location>
    <ligand>
        <name>substrate</name>
    </ligand>
</feature>
<feature type="binding site" evidence="1">
    <location>
        <position position="200"/>
    </location>
    <ligand>
        <name>substrate</name>
    </ligand>
</feature>
<organism>
    <name type="scientific">Escherichia coli (strain ATCC 8739 / DSM 1576 / NBRC 3972 / NCIMB 8545 / WDCM 00012 / Crooks)</name>
    <dbReference type="NCBI Taxonomy" id="481805"/>
    <lineage>
        <taxon>Bacteria</taxon>
        <taxon>Pseudomonadati</taxon>
        <taxon>Pseudomonadota</taxon>
        <taxon>Gammaproteobacteria</taxon>
        <taxon>Enterobacterales</taxon>
        <taxon>Enterobacteriaceae</taxon>
        <taxon>Escherichia</taxon>
    </lineage>
</organism>
<comment type="function">
    <text evidence="1">Responsible for synthesis of pseudouridine from uracil-55 in the psi GC loop of transfer RNAs.</text>
</comment>
<comment type="catalytic activity">
    <reaction evidence="1">
        <text>uridine(55) in tRNA = pseudouridine(55) in tRNA</text>
        <dbReference type="Rhea" id="RHEA:42532"/>
        <dbReference type="Rhea" id="RHEA-COMP:10101"/>
        <dbReference type="Rhea" id="RHEA-COMP:10102"/>
        <dbReference type="ChEBI" id="CHEBI:65314"/>
        <dbReference type="ChEBI" id="CHEBI:65315"/>
        <dbReference type="EC" id="5.4.99.25"/>
    </reaction>
</comment>
<comment type="similarity">
    <text evidence="1">Belongs to the pseudouridine synthase TruB family. Type 1 subfamily.</text>
</comment>